<organism>
    <name type="scientific">Bos taurus</name>
    <name type="common">Bovine</name>
    <dbReference type="NCBI Taxonomy" id="9913"/>
    <lineage>
        <taxon>Eukaryota</taxon>
        <taxon>Metazoa</taxon>
        <taxon>Chordata</taxon>
        <taxon>Craniata</taxon>
        <taxon>Vertebrata</taxon>
        <taxon>Euteleostomi</taxon>
        <taxon>Mammalia</taxon>
        <taxon>Eutheria</taxon>
        <taxon>Laurasiatheria</taxon>
        <taxon>Artiodactyla</taxon>
        <taxon>Ruminantia</taxon>
        <taxon>Pecora</taxon>
        <taxon>Bovidae</taxon>
        <taxon>Bovinae</taxon>
        <taxon>Bos</taxon>
    </lineage>
</organism>
<evidence type="ECO:0000250" key="1">
    <source>
        <dbReference type="UniProtKB" id="P11169"/>
    </source>
</evidence>
<evidence type="ECO:0000250" key="2">
    <source>
        <dbReference type="UniProtKB" id="Q9JIF3"/>
    </source>
</evidence>
<evidence type="ECO:0000250" key="3">
    <source>
        <dbReference type="UniProtKB" id="Q9JJZ1"/>
    </source>
</evidence>
<evidence type="ECO:0000250" key="4">
    <source>
        <dbReference type="UniProtKB" id="Q9NY64"/>
    </source>
</evidence>
<evidence type="ECO:0000255" key="5"/>
<evidence type="ECO:0000256" key="6">
    <source>
        <dbReference type="SAM" id="MobiDB-lite"/>
    </source>
</evidence>
<evidence type="ECO:0000269" key="7">
    <source>
    </source>
</evidence>
<evidence type="ECO:0000303" key="8">
    <source>
    </source>
</evidence>
<evidence type="ECO:0000305" key="9"/>
<evidence type="ECO:0000305" key="10">
    <source>
    </source>
</evidence>
<protein>
    <recommendedName>
        <fullName evidence="9">Solute carrier family 2, facilitated glucose transporter member 8</fullName>
    </recommendedName>
    <alternativeName>
        <fullName evidence="8">Glucose transporter type 8</fullName>
        <shortName evidence="8">GLUT-8</shortName>
    </alternativeName>
    <alternativeName>
        <fullName evidence="4">Glucose transporter type X1</fullName>
    </alternativeName>
</protein>
<dbReference type="EMBL" id="AY208940">
    <property type="protein sequence ID" value="AAP43920.1"/>
    <property type="molecule type" value="mRNA"/>
</dbReference>
<dbReference type="EMBL" id="BC114811">
    <property type="protein sequence ID" value="AAI14812.1"/>
    <property type="molecule type" value="mRNA"/>
</dbReference>
<dbReference type="EMBL" id="AF321324">
    <property type="protein sequence ID" value="AAK69606.1"/>
    <property type="molecule type" value="mRNA"/>
</dbReference>
<dbReference type="RefSeq" id="NP_963286.1">
    <property type="nucleotide sequence ID" value="NM_201528.1"/>
</dbReference>
<dbReference type="SMR" id="P58354"/>
<dbReference type="FunCoup" id="P58354">
    <property type="interactions" value="116"/>
</dbReference>
<dbReference type="STRING" id="9913.ENSBTAP00000009144"/>
<dbReference type="GlyCosmos" id="P58354">
    <property type="glycosylation" value="1 site, No reported glycans"/>
</dbReference>
<dbReference type="GlyGen" id="P58354">
    <property type="glycosylation" value="1 site"/>
</dbReference>
<dbReference type="PaxDb" id="9913-ENSBTAP00000009144"/>
<dbReference type="GeneID" id="282867"/>
<dbReference type="KEGG" id="bta:282867"/>
<dbReference type="CTD" id="29988"/>
<dbReference type="eggNOG" id="KOG0254">
    <property type="taxonomic scope" value="Eukaryota"/>
</dbReference>
<dbReference type="InParanoid" id="P58354"/>
<dbReference type="OrthoDB" id="6612291at2759"/>
<dbReference type="Proteomes" id="UP000009136">
    <property type="component" value="Unplaced"/>
</dbReference>
<dbReference type="GO" id="GO:0030659">
    <property type="term" value="C:cytoplasmic vesicle membrane"/>
    <property type="evidence" value="ECO:0007669"/>
    <property type="project" value="UniProtKB-SubCell"/>
</dbReference>
<dbReference type="GO" id="GO:0016020">
    <property type="term" value="C:membrane"/>
    <property type="evidence" value="ECO:0000318"/>
    <property type="project" value="GO_Central"/>
</dbReference>
<dbReference type="GO" id="GO:0005886">
    <property type="term" value="C:plasma membrane"/>
    <property type="evidence" value="ECO:0007669"/>
    <property type="project" value="UniProtKB-SubCell"/>
</dbReference>
<dbReference type="GO" id="GO:0055056">
    <property type="term" value="F:D-glucose transmembrane transporter activity"/>
    <property type="evidence" value="ECO:0000250"/>
    <property type="project" value="UniProtKB"/>
</dbReference>
<dbReference type="GO" id="GO:0033300">
    <property type="term" value="F:dehydroascorbic acid transmembrane transporter activity"/>
    <property type="evidence" value="ECO:0000250"/>
    <property type="project" value="UniProtKB"/>
</dbReference>
<dbReference type="GO" id="GO:0005353">
    <property type="term" value="F:fructose transmembrane transporter activity"/>
    <property type="evidence" value="ECO:0000250"/>
    <property type="project" value="UniProtKB"/>
</dbReference>
<dbReference type="GO" id="GO:1904659">
    <property type="term" value="P:D-glucose transmembrane transport"/>
    <property type="evidence" value="ECO:0000250"/>
    <property type="project" value="UniProtKB"/>
</dbReference>
<dbReference type="GO" id="GO:0070837">
    <property type="term" value="P:dehydroascorbic acid transport"/>
    <property type="evidence" value="ECO:0000250"/>
    <property type="project" value="UniProtKB"/>
</dbReference>
<dbReference type="GO" id="GO:0015755">
    <property type="term" value="P:fructose transmembrane transport"/>
    <property type="evidence" value="ECO:0000250"/>
    <property type="project" value="UniProtKB"/>
</dbReference>
<dbReference type="FunFam" id="1.20.1250.20:FF:000055">
    <property type="entry name" value="Facilitated trehalose transporter Tret1-2 homolog"/>
    <property type="match status" value="1"/>
</dbReference>
<dbReference type="Gene3D" id="1.20.1250.20">
    <property type="entry name" value="MFS general substrate transporter like domains"/>
    <property type="match status" value="1"/>
</dbReference>
<dbReference type="InterPro" id="IPR020846">
    <property type="entry name" value="MFS_dom"/>
</dbReference>
<dbReference type="InterPro" id="IPR005828">
    <property type="entry name" value="MFS_sugar_transport-like"/>
</dbReference>
<dbReference type="InterPro" id="IPR036259">
    <property type="entry name" value="MFS_trans_sf"/>
</dbReference>
<dbReference type="InterPro" id="IPR050549">
    <property type="entry name" value="MFS_Trehalose_Transporter"/>
</dbReference>
<dbReference type="InterPro" id="IPR003663">
    <property type="entry name" value="Sugar/inositol_transpt"/>
</dbReference>
<dbReference type="InterPro" id="IPR005829">
    <property type="entry name" value="Sugar_transporter_CS"/>
</dbReference>
<dbReference type="NCBIfam" id="TIGR00879">
    <property type="entry name" value="SP"/>
    <property type="match status" value="1"/>
</dbReference>
<dbReference type="PANTHER" id="PTHR48021">
    <property type="match status" value="1"/>
</dbReference>
<dbReference type="PANTHER" id="PTHR48021:SF18">
    <property type="entry name" value="SOLUTE CARRIER FAMILY 2, FACILITATED GLUCOSE TRANSPORTER MEMBER 8"/>
    <property type="match status" value="1"/>
</dbReference>
<dbReference type="Pfam" id="PF00083">
    <property type="entry name" value="Sugar_tr"/>
    <property type="match status" value="1"/>
</dbReference>
<dbReference type="PRINTS" id="PR00171">
    <property type="entry name" value="SUGRTRNSPORT"/>
</dbReference>
<dbReference type="SUPFAM" id="SSF103473">
    <property type="entry name" value="MFS general substrate transporter"/>
    <property type="match status" value="1"/>
</dbReference>
<dbReference type="PROSITE" id="PS50850">
    <property type="entry name" value="MFS"/>
    <property type="match status" value="1"/>
</dbReference>
<dbReference type="PROSITE" id="PS00216">
    <property type="entry name" value="SUGAR_TRANSPORT_1"/>
    <property type="match status" value="2"/>
</dbReference>
<dbReference type="PROSITE" id="PS00217">
    <property type="entry name" value="SUGAR_TRANSPORT_2"/>
    <property type="match status" value="1"/>
</dbReference>
<name>SL2A8_BOVIN</name>
<accession>P58354</accession>
<accession>Q1RMN1</accession>
<accession>Q6XUI2</accession>
<sequence>MTPEDQEETQPLLRPPGGSAPRGRRVFLAAFAAALGPLSFGFALGYSSPAIPSLRRAAPPAPHLDEDAASWFGAIVTLGAAAGGVLGGWLLDRAGRKLSLVLCALPFVAGFAVITAAQNLWMLLGGRLLTGLACGIASLVAPVYISEIAYPEVRGLLGSCVQLMVVTGILLAYLAGWVLEWRWLAVLGCVPPSFMLLLMCFMPETPRFLLSQHKHQEAMAAMQFLWGYAQGWEEPPLGAQHQDFHVAQLRRPGVYKPFIIGISLMAFQQLSGVNAVMFYAETIFEEAKFKDSSLASVVVGVIQVLFTATAALIMDRAGRRLLLTLSGVVMVFSTSAFGTYFKLTEGGPSNSSHVDLPALVSMEAADTNVGLAWLAVGSMCLFIAGFAVGWGPIPWLLMSEIFPLHVKGVATGVCVLTNWFMAFLVTKEFSSLMEVLRPYGAFWLASAFCIFGVLFTLACVPETKGKTLEQITAHFEGR</sequence>
<proteinExistence type="evidence at transcript level"/>
<feature type="chain" id="PRO_0000050374" description="Solute carrier family 2, facilitated glucose transporter member 8">
    <location>
        <begin position="1"/>
        <end position="478"/>
    </location>
</feature>
<feature type="topological domain" description="Cytoplasmic" evidence="5">
    <location>
        <begin position="1"/>
        <end position="25"/>
    </location>
</feature>
<feature type="transmembrane region" description="Helical; Name=1" evidence="5">
    <location>
        <begin position="26"/>
        <end position="46"/>
    </location>
</feature>
<feature type="topological domain" description="Extracellular" evidence="5">
    <location>
        <begin position="47"/>
        <end position="70"/>
    </location>
</feature>
<feature type="transmembrane region" description="Helical; Name=2" evidence="5">
    <location>
        <begin position="71"/>
        <end position="91"/>
    </location>
</feature>
<feature type="topological domain" description="Cytoplasmic" evidence="5">
    <location>
        <begin position="92"/>
        <end position="97"/>
    </location>
</feature>
<feature type="transmembrane region" description="Helical; Name=3" evidence="5">
    <location>
        <begin position="98"/>
        <end position="118"/>
    </location>
</feature>
<feature type="topological domain" description="Extracellular" evidence="5">
    <location>
        <begin position="119"/>
        <end position="127"/>
    </location>
</feature>
<feature type="transmembrane region" description="Helical; Name=4" evidence="5">
    <location>
        <begin position="128"/>
        <end position="148"/>
    </location>
</feature>
<feature type="topological domain" description="Cytoplasmic" evidence="5">
    <location>
        <begin position="149"/>
        <end position="158"/>
    </location>
</feature>
<feature type="transmembrane region" description="Helical; Name=5" evidence="5">
    <location>
        <begin position="159"/>
        <end position="179"/>
    </location>
</feature>
<feature type="topological domain" description="Extracellular" evidence="5">
    <location>
        <begin position="180"/>
        <end position="182"/>
    </location>
</feature>
<feature type="transmembrane region" description="Helical; Name=6" evidence="5">
    <location>
        <begin position="183"/>
        <end position="203"/>
    </location>
</feature>
<feature type="topological domain" description="Cytoplasmic" evidence="5">
    <location>
        <begin position="204"/>
        <end position="257"/>
    </location>
</feature>
<feature type="transmembrane region" description="Helical; Name=7" evidence="5">
    <location>
        <begin position="258"/>
        <end position="278"/>
    </location>
</feature>
<feature type="topological domain" description="Extracellular" evidence="5">
    <location>
        <begin position="279"/>
        <end position="293"/>
    </location>
</feature>
<feature type="transmembrane region" description="Helical; Name=8" evidence="5">
    <location>
        <begin position="294"/>
        <end position="314"/>
    </location>
</feature>
<feature type="topological domain" description="Cytoplasmic" evidence="5">
    <location>
        <begin position="315"/>
        <end position="320"/>
    </location>
</feature>
<feature type="transmembrane region" description="Helical; Name=9" evidence="5">
    <location>
        <begin position="321"/>
        <end position="341"/>
    </location>
</feature>
<feature type="topological domain" description="Extracellular" evidence="5">
    <location>
        <begin position="342"/>
        <end position="368"/>
    </location>
</feature>
<feature type="transmembrane region" description="Helical; Name=10" evidence="5">
    <location>
        <begin position="369"/>
        <end position="389"/>
    </location>
</feature>
<feature type="topological domain" description="Cytoplasmic" evidence="5">
    <location>
        <begin position="390"/>
        <end position="405"/>
    </location>
</feature>
<feature type="transmembrane region" description="Helical; Name=11" evidence="5">
    <location>
        <begin position="406"/>
        <end position="426"/>
    </location>
</feature>
<feature type="topological domain" description="Extracellular" evidence="5">
    <location>
        <begin position="427"/>
        <end position="439"/>
    </location>
</feature>
<feature type="transmembrane region" description="Helical; Name=12" evidence="5">
    <location>
        <begin position="440"/>
        <end position="460"/>
    </location>
</feature>
<feature type="topological domain" description="Cytoplasmic" evidence="5">
    <location>
        <begin position="461"/>
        <end position="478"/>
    </location>
</feature>
<feature type="region of interest" description="Disordered" evidence="6">
    <location>
        <begin position="1"/>
        <end position="20"/>
    </location>
</feature>
<feature type="short sequence motif" description="Dileucine internalization motif" evidence="3">
    <location>
        <begin position="12"/>
        <end position="13"/>
    </location>
</feature>
<feature type="compositionally biased region" description="Low complexity" evidence="6">
    <location>
        <begin position="11"/>
        <end position="20"/>
    </location>
</feature>
<feature type="binding site" evidence="1">
    <location>
        <position position="162"/>
    </location>
    <ligand>
        <name>D-glucose</name>
        <dbReference type="ChEBI" id="CHEBI:4167"/>
    </ligand>
</feature>
<feature type="binding site" evidence="1">
    <location>
        <begin position="268"/>
        <end position="269"/>
    </location>
    <ligand>
        <name>D-glucose</name>
        <dbReference type="ChEBI" id="CHEBI:4167"/>
    </ligand>
</feature>
<feature type="binding site" evidence="1">
    <location>
        <position position="274"/>
    </location>
    <ligand>
        <name>D-glucose</name>
        <dbReference type="ChEBI" id="CHEBI:4167"/>
    </ligand>
</feature>
<feature type="binding site" evidence="1">
    <location>
        <position position="395"/>
    </location>
    <ligand>
        <name>D-glucose</name>
        <dbReference type="ChEBI" id="CHEBI:4167"/>
    </ligand>
</feature>
<feature type="glycosylation site" description="N-linked (GlcNAc...) asparagine" evidence="5">
    <location>
        <position position="350"/>
    </location>
</feature>
<feature type="sequence conflict" description="In Ref. 3; AAK69606." evidence="9" ref="3">
    <original>P</original>
    <variation>A</variation>
    <location>
        <position position="191"/>
    </location>
</feature>
<feature type="sequence conflict" description="In Ref. 3; AAK69606." evidence="9" ref="3">
    <original>S</original>
    <variation>N</variation>
    <location>
        <position position="378"/>
    </location>
</feature>
<comment type="function">
    <text evidence="2">Insulin-regulated facilitative hexose transporter that mediates the transport of glucose and fructose. Facilitates hepatic influx of dietary trehalose, which in turn inhibits glucose and fructose influx triggering a starvation signal and hepatic autophagy through activation of AMPK and ULK1. Also able to mediate the transport of dehydroascorbate.</text>
</comment>
<comment type="catalytic activity">
    <reaction evidence="2">
        <text>D-glucose(out) = D-glucose(in)</text>
        <dbReference type="Rhea" id="RHEA:60376"/>
        <dbReference type="ChEBI" id="CHEBI:4167"/>
    </reaction>
</comment>
<comment type="catalytic activity">
    <reaction evidence="2">
        <text>D-fructose(out) = D-fructose(in)</text>
        <dbReference type="Rhea" id="RHEA:60372"/>
        <dbReference type="ChEBI" id="CHEBI:37721"/>
    </reaction>
</comment>
<comment type="catalytic activity">
    <reaction evidence="2">
        <text>L-dehydroascorbate(out) = L-dehydroascorbate(in)</text>
        <dbReference type="Rhea" id="RHEA:60380"/>
        <dbReference type="ChEBI" id="CHEBI:58539"/>
    </reaction>
</comment>
<comment type="catalytic activity">
    <reaction evidence="2">
        <text>alpha,alpha-trehalose(in) = alpha,alpha-trehalose(out)</text>
        <dbReference type="Rhea" id="RHEA:17629"/>
        <dbReference type="ChEBI" id="CHEBI:16551"/>
    </reaction>
</comment>
<comment type="activity regulation">
    <text evidence="2">Inhibited by cytochalasin B.</text>
</comment>
<comment type="subunit">
    <text evidence="2">Interacts with AP2B1.</text>
</comment>
<comment type="subcellular location">
    <subcellularLocation>
        <location evidence="3">Cell membrane</location>
        <topology evidence="5">Multi-pass membrane protein</topology>
    </subcellularLocation>
    <subcellularLocation>
        <location evidence="10">Cytoplasmic vesicle membrane</location>
        <topology evidence="5">Multi-pass membrane protein</topology>
    </subcellularLocation>
    <text evidence="3">Principally intracellular. May move between intracellular vesicles and the plasma membrane. The dileucine internalization motif is critical for intracellular sequestration.</text>
</comment>
<comment type="tissue specificity">
    <text evidence="7">Abundantly expressed in testis and more moderately in lung, kidney, spleen, intestine, skeletal muscle, liver and mammary gland.</text>
</comment>
<comment type="induction">
    <text evidence="7">Up-regulated during pregnancy and lactation.</text>
</comment>
<comment type="similarity">
    <text evidence="9">Belongs to the major facilitator superfamily. Sugar transporter (TC 2.A.1.1) family. Glucose transporter subfamily.</text>
</comment>
<keyword id="KW-1003">Cell membrane</keyword>
<keyword id="KW-0968">Cytoplasmic vesicle</keyword>
<keyword id="KW-0325">Glycoprotein</keyword>
<keyword id="KW-0472">Membrane</keyword>
<keyword id="KW-1185">Reference proteome</keyword>
<keyword id="KW-0762">Sugar transport</keyword>
<keyword id="KW-0812">Transmembrane</keyword>
<keyword id="KW-1133">Transmembrane helix</keyword>
<keyword id="KW-0813">Transport</keyword>
<reference key="1">
    <citation type="journal article" date="2004" name="Biochim. Biophys. Acta">
        <title>Bovine glucose transporter GLUT8: cloning, expression, and developmental regulation in mammary gland.</title>
        <authorList>
            <person name="Zhao F.-Q."/>
            <person name="Miller P.J."/>
            <person name="Wall E.H."/>
            <person name="Zheng Y.-C."/>
            <person name="Dong B."/>
            <person name="Neville M.C."/>
            <person name="McFadden T.B."/>
        </authorList>
    </citation>
    <scope>NUCLEOTIDE SEQUENCE [MRNA]</scope>
    <scope>TISSUE SPECIFICITY</scope>
    <scope>INDUCTION</scope>
    <scope>SUBCELLULAR LOCATION</scope>
    <source>
        <tissue>Kidney</tissue>
    </source>
</reference>
<reference key="2">
    <citation type="submission" date="2006-04" db="EMBL/GenBank/DDBJ databases">
        <authorList>
            <consortium name="NIH - Mammalian Gene Collection (MGC) project"/>
        </authorList>
    </citation>
    <scope>NUCLEOTIDE SEQUENCE [LARGE SCALE MRNA]</scope>
    <source>
        <strain>Hereford</strain>
        <tissue>Hypothalamus</tissue>
    </source>
</reference>
<reference key="3">
    <citation type="journal article" date="2001" name="Mol. Reprod. Dev.">
        <title>Glucose transporter expression is developmentally regulated in in vitro derived bovine preimplantation embryos.</title>
        <authorList>
            <person name="Augustin R."/>
            <person name="Pocar P."/>
            <person name="Navarrete-Santos A."/>
            <person name="Wrenzycki C."/>
            <person name="Gandolfi F."/>
            <person name="Niemann H."/>
            <person name="Fischer B."/>
        </authorList>
    </citation>
    <scope>NUCLEOTIDE SEQUENCE [MRNA] OF 145-478</scope>
</reference>
<gene>
    <name evidence="4" type="primary">SLC2A8</name>
    <name evidence="8" type="synonym">GLUT8</name>
    <name evidence="4" type="synonym">GLUTX1</name>
</gene>